<comment type="function">
    <text evidence="2 3 4">May be a membrane transporter required for proton motive force (PMF)-dependent drug efflux. Required, with YqjA, for the proper export of certain periplasmic amidases and, possibly, other Tat substrates. May play a role in determining membrane lipid composition.</text>
</comment>
<comment type="subcellular location">
    <subcellularLocation>
        <location>Cell inner membrane</location>
        <topology>Multi-pass membrane protein</topology>
    </subcellularLocation>
</comment>
<comment type="disruption phenotype">
    <text evidence="2 3 4">Double mutants lacking both yghB and yqjA show incomplete cell division, temperature sensitivity and altered phospholipid levels. They are also hypersensitive to several compounds known to be exported by other drug efflux proteins, including ethidium bromide, methyl viologen, acriflavine and beta-lactam antibiotics. Expression of either yghB or yqjA can restore the wild-type phenotype, suggesting that these proteins have redundant functions. Both individual null mutant strains grow normally at all temperatures.</text>
</comment>
<comment type="similarity">
    <text evidence="5">Belongs to the DedA family.</text>
</comment>
<gene>
    <name type="primary">yghB</name>
    <name type="ordered locus">b3009</name>
    <name type="ordered locus">JW2976</name>
</gene>
<feature type="chain" id="PRO_0000161411" description="Inner membrane protein YghB">
    <location>
        <begin position="1"/>
        <end position="219"/>
    </location>
</feature>
<feature type="topological domain" description="Cytoplasmic" evidence="1">
    <location>
        <begin position="1"/>
        <end position="17"/>
    </location>
</feature>
<feature type="transmembrane region" description="Helical" evidence="1">
    <location>
        <begin position="18"/>
        <end position="38"/>
    </location>
</feature>
<feature type="topological domain" description="Periplasmic" evidence="1">
    <location>
        <begin position="39"/>
        <end position="67"/>
    </location>
</feature>
<feature type="transmembrane region" description="Helical" evidence="1">
    <location>
        <begin position="68"/>
        <end position="88"/>
    </location>
</feature>
<feature type="topological domain" description="Cytoplasmic" evidence="1">
    <location>
        <begin position="89"/>
        <end position="160"/>
    </location>
</feature>
<feature type="transmembrane region" description="Helical" evidence="1">
    <location>
        <begin position="161"/>
        <end position="181"/>
    </location>
</feature>
<feature type="topological domain" description="Periplasmic" evidence="1">
    <location>
        <begin position="182"/>
        <end position="191"/>
    </location>
</feature>
<feature type="transmembrane region" description="Helical" evidence="1">
    <location>
        <begin position="192"/>
        <end position="212"/>
    </location>
</feature>
<feature type="topological domain" description="Cytoplasmic" evidence="1">
    <location>
        <begin position="213"/>
        <end position="219"/>
    </location>
</feature>
<feature type="mutagenesis site" description="Abolishes the ability to restore growth, cell division or drug resistance in double mutant." evidence="4">
    <original>E</original>
    <variation>A</variation>
    <location>
        <position position="39"/>
    </location>
</feature>
<feature type="mutagenesis site" description="Abolishes the ability to restore growth, cell division or drug resistance in double mutant." evidence="4">
    <original>D</original>
    <variation>A</variation>
    <location>
        <position position="51"/>
    </location>
</feature>
<reference key="1">
    <citation type="journal article" date="1997" name="Science">
        <title>The complete genome sequence of Escherichia coli K-12.</title>
        <authorList>
            <person name="Blattner F.R."/>
            <person name="Plunkett G. III"/>
            <person name="Bloch C.A."/>
            <person name="Perna N.T."/>
            <person name="Burland V."/>
            <person name="Riley M."/>
            <person name="Collado-Vides J."/>
            <person name="Glasner J.D."/>
            <person name="Rode C.K."/>
            <person name="Mayhew G.F."/>
            <person name="Gregor J."/>
            <person name="Davis N.W."/>
            <person name="Kirkpatrick H.A."/>
            <person name="Goeden M.A."/>
            <person name="Rose D.J."/>
            <person name="Mau B."/>
            <person name="Shao Y."/>
        </authorList>
    </citation>
    <scope>NUCLEOTIDE SEQUENCE [LARGE SCALE GENOMIC DNA]</scope>
    <source>
        <strain>K12 / MG1655 / ATCC 47076</strain>
    </source>
</reference>
<reference key="2">
    <citation type="journal article" date="2006" name="Mol. Syst. Biol.">
        <title>Highly accurate genome sequences of Escherichia coli K-12 strains MG1655 and W3110.</title>
        <authorList>
            <person name="Hayashi K."/>
            <person name="Morooka N."/>
            <person name="Yamamoto Y."/>
            <person name="Fujita K."/>
            <person name="Isono K."/>
            <person name="Choi S."/>
            <person name="Ohtsubo E."/>
            <person name="Baba T."/>
            <person name="Wanner B.L."/>
            <person name="Mori H."/>
            <person name="Horiuchi T."/>
        </authorList>
    </citation>
    <scope>NUCLEOTIDE SEQUENCE [LARGE SCALE GENOMIC DNA]</scope>
    <source>
        <strain>K12 / W3110 / ATCC 27325 / DSM 5911</strain>
    </source>
</reference>
<reference key="3">
    <citation type="journal article" date="1986" name="Proc. Natl. Acad. Sci. U.S.A.">
        <title>Evolution in biosynthetic pathways: two enzymes catalyzing consecutive steps in methionine biosynthesis originate from a common ancestor and possess a similar regulatory region.</title>
        <authorList>
            <person name="Belfaiza J."/>
            <person name="Parsot C."/>
            <person name="Martel A."/>
            <person name="de la Tour C.B."/>
            <person name="Margarita D."/>
            <person name="Cohen G.N."/>
            <person name="Saint-Girons I."/>
        </authorList>
    </citation>
    <scope>NUCLEOTIDE SEQUENCE [GENOMIC DNA] OF 1-18</scope>
</reference>
<reference key="4">
    <citation type="journal article" date="2005" name="Science">
        <title>Global topology analysis of the Escherichia coli inner membrane proteome.</title>
        <authorList>
            <person name="Daley D.O."/>
            <person name="Rapp M."/>
            <person name="Granseth E."/>
            <person name="Melen K."/>
            <person name="Drew D."/>
            <person name="von Heijne G."/>
        </authorList>
    </citation>
    <scope>TOPOLOGY [LARGE SCALE ANALYSIS]</scope>
    <source>
        <strain>K12 / MG1655 / ATCC 47076</strain>
    </source>
</reference>
<reference key="5">
    <citation type="journal article" date="2008" name="J. Bacteriol.">
        <title>Temperature sensitivity and cell division defects in an Escherichia coli strain with mutations in yghB and yqjA, encoding related and conserved inner membrane proteins.</title>
        <authorList>
            <person name="Thompkins K."/>
            <person name="Chattopadhyay B."/>
            <person name="Xiao Y."/>
            <person name="Henk M.C."/>
            <person name="Doerrler W.T."/>
        </authorList>
    </citation>
    <scope>FUNCTION</scope>
    <scope>DISRUPTION PHENOTYPE</scope>
</reference>
<reference key="6">
    <citation type="journal article" date="2010" name="J. Bacteriol.">
        <title>Inefficient Tat-dependent export of periplasmic amidases in an Escherichia coli strain with mutations in two DedA family genes.</title>
        <authorList>
            <person name="Sikdar R."/>
            <person name="Doerrler W.T."/>
        </authorList>
    </citation>
    <scope>FUNCTION</scope>
    <scope>DISRUPTION PHENOTYPE</scope>
</reference>
<reference key="7">
    <citation type="journal article" date="2014" name="Antimicrob. Agents Chemother.">
        <title>Members of the conserved DedA family are likely membrane transporters and are required for drug resistance in Escherichia coli.</title>
        <authorList>
            <person name="Kumar S."/>
            <person name="Doerrler W.T."/>
        </authorList>
    </citation>
    <scope>FUNCTION</scope>
    <scope>DISRUPTION PHENOTYPE</scope>
    <scope>MUTAGENESIS OF GLU-39 AND ASP-51</scope>
    <source>
        <strain>K12 / W3110 / ATCC 27325 / DSM 5911</strain>
    </source>
</reference>
<sequence>MAVIQDIIAALWQHDFAALADPHIVSVVYFVMFATLFLENGLLPASFLPGDSLLILAGALIAQGVMDFLPTIAILTAAASLGCWLSYIQGRWLGNTKTVKGWLAQLPAKYHQRATCMFDRHGLLALLAGRFLAFVRTLLPTMAGISGLPNRRFQFFNWLSGLLWVSVVTSFGYALSMIPFVKRHEDQVMTFLMILPIALLTAGLLGTLFVVIKKKYCNA</sequence>
<organism>
    <name type="scientific">Escherichia coli (strain K12)</name>
    <dbReference type="NCBI Taxonomy" id="83333"/>
    <lineage>
        <taxon>Bacteria</taxon>
        <taxon>Pseudomonadati</taxon>
        <taxon>Pseudomonadota</taxon>
        <taxon>Gammaproteobacteria</taxon>
        <taxon>Enterobacterales</taxon>
        <taxon>Enterobacteriaceae</taxon>
        <taxon>Escherichia</taxon>
    </lineage>
</organism>
<dbReference type="EMBL" id="U28377">
    <property type="protein sequence ID" value="AAA69176.1"/>
    <property type="molecule type" value="Genomic_DNA"/>
</dbReference>
<dbReference type="EMBL" id="U00096">
    <property type="protein sequence ID" value="AAC76045.1"/>
    <property type="molecule type" value="Genomic_DNA"/>
</dbReference>
<dbReference type="EMBL" id="AP009048">
    <property type="protein sequence ID" value="BAE77066.1"/>
    <property type="molecule type" value="Genomic_DNA"/>
</dbReference>
<dbReference type="EMBL" id="M12858">
    <property type="status" value="NOT_ANNOTATED_CDS"/>
    <property type="molecule type" value="Genomic_DNA"/>
</dbReference>
<dbReference type="PIR" id="G65087">
    <property type="entry name" value="G65087"/>
</dbReference>
<dbReference type="RefSeq" id="NP_417482.1">
    <property type="nucleotide sequence ID" value="NC_000913.3"/>
</dbReference>
<dbReference type="RefSeq" id="WP_000268419.1">
    <property type="nucleotide sequence ID" value="NZ_STEB01000001.1"/>
</dbReference>
<dbReference type="BioGRID" id="4262378">
    <property type="interactions" value="169"/>
</dbReference>
<dbReference type="FunCoup" id="P0AA60">
    <property type="interactions" value="103"/>
</dbReference>
<dbReference type="STRING" id="511145.b3009"/>
<dbReference type="TCDB" id="9.B.27.2.1">
    <property type="family name" value="the death effector domain a (deda) family"/>
</dbReference>
<dbReference type="PaxDb" id="511145-b3009"/>
<dbReference type="EnsemblBacteria" id="AAC76045">
    <property type="protein sequence ID" value="AAC76045"/>
    <property type="gene ID" value="b3009"/>
</dbReference>
<dbReference type="GeneID" id="93778979"/>
<dbReference type="GeneID" id="947490"/>
<dbReference type="KEGG" id="ecj:JW2976"/>
<dbReference type="KEGG" id="eco:b3009"/>
<dbReference type="KEGG" id="ecoc:C3026_16445"/>
<dbReference type="PATRIC" id="fig|1411691.4.peg.3721"/>
<dbReference type="EchoBASE" id="EB1771"/>
<dbReference type="eggNOG" id="COG0586">
    <property type="taxonomic scope" value="Bacteria"/>
</dbReference>
<dbReference type="HOGENOM" id="CLU_044208_6_2_6"/>
<dbReference type="InParanoid" id="P0AA60"/>
<dbReference type="OMA" id="QGRWLGH"/>
<dbReference type="OrthoDB" id="13976at2"/>
<dbReference type="PhylomeDB" id="P0AA60"/>
<dbReference type="BioCyc" id="EcoCyc:EG11824-MONOMER"/>
<dbReference type="PRO" id="PR:P0AA60"/>
<dbReference type="Proteomes" id="UP000000625">
    <property type="component" value="Chromosome"/>
</dbReference>
<dbReference type="GO" id="GO:0005886">
    <property type="term" value="C:plasma membrane"/>
    <property type="evidence" value="ECO:0000314"/>
    <property type="project" value="EcoCyc"/>
</dbReference>
<dbReference type="GO" id="GO:0022857">
    <property type="term" value="F:transmembrane transporter activity"/>
    <property type="evidence" value="ECO:0000315"/>
    <property type="project" value="EcoCyc"/>
</dbReference>
<dbReference type="GO" id="GO:0043093">
    <property type="term" value="P:FtsZ-dependent cytokinesis"/>
    <property type="evidence" value="ECO:0000316"/>
    <property type="project" value="EcoCyc"/>
</dbReference>
<dbReference type="GO" id="GO:0009410">
    <property type="term" value="P:response to xenobiotic stimulus"/>
    <property type="evidence" value="ECO:0000269"/>
    <property type="project" value="EcoCyc"/>
</dbReference>
<dbReference type="GO" id="GO:0055085">
    <property type="term" value="P:transmembrane transport"/>
    <property type="evidence" value="ECO:0000315"/>
    <property type="project" value="EcoCyc"/>
</dbReference>
<dbReference type="InterPro" id="IPR032818">
    <property type="entry name" value="DedA-like"/>
</dbReference>
<dbReference type="InterPro" id="IPR032816">
    <property type="entry name" value="VTT_dom"/>
</dbReference>
<dbReference type="PANTHER" id="PTHR30353">
    <property type="entry name" value="INNER MEMBRANE PROTEIN DEDA-RELATED"/>
    <property type="match status" value="1"/>
</dbReference>
<dbReference type="PANTHER" id="PTHR30353:SF10">
    <property type="entry name" value="INNER MEMBRANE PROTEIN YGHB"/>
    <property type="match status" value="1"/>
</dbReference>
<dbReference type="Pfam" id="PF09335">
    <property type="entry name" value="VTT_dom"/>
    <property type="match status" value="1"/>
</dbReference>
<accession>P0AA60</accession>
<accession>P33196</accession>
<accession>Q2M9J0</accession>
<keyword id="KW-0997">Cell inner membrane</keyword>
<keyword id="KW-1003">Cell membrane</keyword>
<keyword id="KW-0472">Membrane</keyword>
<keyword id="KW-1185">Reference proteome</keyword>
<keyword id="KW-0812">Transmembrane</keyword>
<keyword id="KW-1133">Transmembrane helix</keyword>
<proteinExistence type="evidence at protein level"/>
<evidence type="ECO:0000255" key="1"/>
<evidence type="ECO:0000269" key="2">
    <source>
    </source>
</evidence>
<evidence type="ECO:0000269" key="3">
    <source>
    </source>
</evidence>
<evidence type="ECO:0000269" key="4">
    <source>
    </source>
</evidence>
<evidence type="ECO:0000305" key="5"/>
<name>YGHB_ECOLI</name>
<protein>
    <recommendedName>
        <fullName>Inner membrane protein YghB</fullName>
    </recommendedName>
</protein>